<organism>
    <name type="scientific">Bovine coronavirus (strain vaccine)</name>
    <name type="common">BCoV</name>
    <name type="synonym">BCV</name>
    <dbReference type="NCBI Taxonomy" id="11134"/>
    <lineage>
        <taxon>Viruses</taxon>
        <taxon>Riboviria</taxon>
        <taxon>Orthornavirae</taxon>
        <taxon>Pisuviricota</taxon>
        <taxon>Pisoniviricetes</taxon>
        <taxon>Nidovirales</taxon>
        <taxon>Cornidovirineae</taxon>
        <taxon>Coronaviridae</taxon>
        <taxon>Orthocoronavirinae</taxon>
        <taxon>Betacoronavirus</taxon>
        <taxon>Embecovirus</taxon>
        <taxon>Betacoronavirus 1</taxon>
    </lineage>
</organism>
<gene>
    <name evidence="2" type="primary">S</name>
    <name type="ORF">3</name>
</gene>
<protein>
    <recommendedName>
        <fullName evidence="2">Spike glycoprotein</fullName>
        <shortName evidence="2">S glycoprotein</shortName>
    </recommendedName>
    <alternativeName>
        <fullName evidence="2">E2</fullName>
    </alternativeName>
    <alternativeName>
        <fullName evidence="2">Peplomer protein</fullName>
    </alternativeName>
    <component>
        <recommendedName>
            <fullName evidence="2">Spike protein S1</fullName>
        </recommendedName>
    </component>
    <component>
        <recommendedName>
            <fullName evidence="2">Spike protein S2</fullName>
        </recommendedName>
    </component>
    <component>
        <recommendedName>
            <fullName evidence="2">Spike protein S2'</fullName>
        </recommendedName>
    </component>
</protein>
<dbReference type="EMBL" id="M64668">
    <property type="protein sequence ID" value="AAA42908.1"/>
    <property type="molecule type" value="Genomic_RNA"/>
</dbReference>
<dbReference type="PIR" id="B40320">
    <property type="entry name" value="VGIHVA"/>
</dbReference>
<dbReference type="SMR" id="P25194"/>
<dbReference type="GlyCosmos" id="P25194">
    <property type="glycosylation" value="18 sites, No reported glycans"/>
</dbReference>
<dbReference type="GO" id="GO:0044173">
    <property type="term" value="C:host cell endoplasmic reticulum-Golgi intermediate compartment membrane"/>
    <property type="evidence" value="ECO:0007669"/>
    <property type="project" value="UniProtKB-SubCell"/>
</dbReference>
<dbReference type="GO" id="GO:0020002">
    <property type="term" value="C:host cell plasma membrane"/>
    <property type="evidence" value="ECO:0007669"/>
    <property type="project" value="UniProtKB-SubCell"/>
</dbReference>
<dbReference type="GO" id="GO:0016020">
    <property type="term" value="C:membrane"/>
    <property type="evidence" value="ECO:0007669"/>
    <property type="project" value="UniProtKB-UniRule"/>
</dbReference>
<dbReference type="GO" id="GO:0019031">
    <property type="term" value="C:viral envelope"/>
    <property type="evidence" value="ECO:0007669"/>
    <property type="project" value="UniProtKB-UniRule"/>
</dbReference>
<dbReference type="GO" id="GO:0055036">
    <property type="term" value="C:virion membrane"/>
    <property type="evidence" value="ECO:0007669"/>
    <property type="project" value="UniProtKB-SubCell"/>
</dbReference>
<dbReference type="GO" id="GO:0075509">
    <property type="term" value="P:endocytosis involved in viral entry into host cell"/>
    <property type="evidence" value="ECO:0007669"/>
    <property type="project" value="UniProtKB-UniRule"/>
</dbReference>
<dbReference type="GO" id="GO:0039654">
    <property type="term" value="P:fusion of virus membrane with host endosome membrane"/>
    <property type="evidence" value="ECO:0007669"/>
    <property type="project" value="UniProtKB-UniRule"/>
</dbReference>
<dbReference type="GO" id="GO:0019064">
    <property type="term" value="P:fusion of virus membrane with host plasma membrane"/>
    <property type="evidence" value="ECO:0007669"/>
    <property type="project" value="UniProtKB-UniRule"/>
</dbReference>
<dbReference type="GO" id="GO:0046813">
    <property type="term" value="P:receptor-mediated virion attachment to host cell"/>
    <property type="evidence" value="ECO:0007669"/>
    <property type="project" value="UniProtKB-UniRule"/>
</dbReference>
<dbReference type="CDD" id="cd21485">
    <property type="entry name" value="HCoV-OC43-like_Spike_S1_RBD"/>
    <property type="match status" value="1"/>
</dbReference>
<dbReference type="CDD" id="cd22380">
    <property type="entry name" value="HKU1-CoV-like_Spike_SD1-2_S1-S2_S2"/>
    <property type="match status" value="1"/>
</dbReference>
<dbReference type="CDD" id="cd21625">
    <property type="entry name" value="MHV-like_Spike_S1_NTD"/>
    <property type="match status" value="1"/>
</dbReference>
<dbReference type="FunFam" id="1.20.5.300:FF:000003">
    <property type="entry name" value="Spike glycoprotein"/>
    <property type="match status" value="1"/>
</dbReference>
<dbReference type="FunFam" id="1.20.5.300:FF:000006">
    <property type="entry name" value="Spike glycoprotein"/>
    <property type="match status" value="1"/>
</dbReference>
<dbReference type="FunFam" id="2.60.120.960:FF:000002">
    <property type="entry name" value="Spike glycoprotein"/>
    <property type="match status" value="1"/>
</dbReference>
<dbReference type="FunFam" id="3.30.70.1840:FF:000003">
    <property type="entry name" value="Spike glycoprotein"/>
    <property type="match status" value="1"/>
</dbReference>
<dbReference type="Gene3D" id="1.20.5.300">
    <property type="match status" value="2"/>
</dbReference>
<dbReference type="Gene3D" id="3.30.70.1840">
    <property type="match status" value="1"/>
</dbReference>
<dbReference type="Gene3D" id="2.60.120.960">
    <property type="entry name" value="Spike glycoprotein, N-terminal domain"/>
    <property type="match status" value="1"/>
</dbReference>
<dbReference type="HAMAP" id="MF_04099">
    <property type="entry name" value="BETA_CORONA_SPIKE"/>
    <property type="match status" value="1"/>
</dbReference>
<dbReference type="InterPro" id="IPR032500">
    <property type="entry name" value="bCoV_S1_N"/>
</dbReference>
<dbReference type="InterPro" id="IPR042578">
    <property type="entry name" value="BETA_CORONA_SPIKE"/>
</dbReference>
<dbReference type="InterPro" id="IPR043607">
    <property type="entry name" value="CoV_S1_C"/>
</dbReference>
<dbReference type="InterPro" id="IPR043473">
    <property type="entry name" value="S2_sf_CoV"/>
</dbReference>
<dbReference type="InterPro" id="IPR043002">
    <property type="entry name" value="Spike_N_sf"/>
</dbReference>
<dbReference type="InterPro" id="IPR044339">
    <property type="entry name" value="Spike_S1_NTD_MHV-like"/>
</dbReference>
<dbReference type="InterPro" id="IPR018548">
    <property type="entry name" value="Spike_S1_RBD_bCoV"/>
</dbReference>
<dbReference type="InterPro" id="IPR044372">
    <property type="entry name" value="Spike_S1_RBD_HCoV-OC43-like"/>
</dbReference>
<dbReference type="InterPro" id="IPR036326">
    <property type="entry name" value="Spike_S1_RBD_sf_bCoV"/>
</dbReference>
<dbReference type="InterPro" id="IPR002552">
    <property type="entry name" value="Spike_S2_CoV"/>
</dbReference>
<dbReference type="InterPro" id="IPR043614">
    <property type="entry name" value="Spike_S2_CoV_C"/>
</dbReference>
<dbReference type="InterPro" id="IPR044873">
    <property type="entry name" value="Spike_S2_CoV_HR1"/>
</dbReference>
<dbReference type="InterPro" id="IPR044874">
    <property type="entry name" value="Spike_S2_CoV_HR2"/>
</dbReference>
<dbReference type="Pfam" id="PF16451">
    <property type="entry name" value="bCoV_S1_N"/>
    <property type="match status" value="1"/>
</dbReference>
<dbReference type="Pfam" id="PF09408">
    <property type="entry name" value="bCoV_S1_RBD"/>
    <property type="match status" value="1"/>
</dbReference>
<dbReference type="Pfam" id="PF19209">
    <property type="entry name" value="CoV_S1_C"/>
    <property type="match status" value="1"/>
</dbReference>
<dbReference type="Pfam" id="PF01601">
    <property type="entry name" value="CoV_S2"/>
    <property type="match status" value="1"/>
</dbReference>
<dbReference type="Pfam" id="PF19214">
    <property type="entry name" value="CoV_S2_C"/>
    <property type="match status" value="1"/>
</dbReference>
<dbReference type="SUPFAM" id="SSF111474">
    <property type="entry name" value="Coronavirus S2 glycoprotein"/>
    <property type="match status" value="2"/>
</dbReference>
<dbReference type="SUPFAM" id="SSF143587">
    <property type="entry name" value="SARS receptor-binding domain-like"/>
    <property type="match status" value="1"/>
</dbReference>
<dbReference type="PROSITE" id="PS51921">
    <property type="entry name" value="BCOV_S1_CTD"/>
    <property type="match status" value="1"/>
</dbReference>
<dbReference type="PROSITE" id="PS51922">
    <property type="entry name" value="BCOV_S1_NTD"/>
    <property type="match status" value="1"/>
</dbReference>
<dbReference type="PROSITE" id="PS51923">
    <property type="entry name" value="COV_S2_HR1"/>
    <property type="match status" value="1"/>
</dbReference>
<dbReference type="PROSITE" id="PS51924">
    <property type="entry name" value="COV_S2_HR2"/>
    <property type="match status" value="1"/>
</dbReference>
<evidence type="ECO:0000250" key="1"/>
<evidence type="ECO:0000255" key="2">
    <source>
        <dbReference type="HAMAP-Rule" id="MF_04099"/>
    </source>
</evidence>
<evidence type="ECO:0000255" key="3">
    <source>
        <dbReference type="PROSITE-ProRule" id="PRU01269"/>
    </source>
</evidence>
<evidence type="ECO:0000255" key="4">
    <source>
        <dbReference type="PROSITE-ProRule" id="PRU01270"/>
    </source>
</evidence>
<feature type="signal peptide" evidence="2">
    <location>
        <begin position="1"/>
        <end position="13"/>
    </location>
</feature>
<feature type="chain" id="PRO_0000037199" description="Spike glycoprotein">
    <location>
        <begin position="14"/>
        <end position="1363"/>
    </location>
</feature>
<feature type="chain" id="PRO_0000037200" description="Spike protein S1">
    <location>
        <begin position="14"/>
        <end position="768"/>
    </location>
</feature>
<feature type="chain" id="PRO_0000037201" description="Spike protein S2">
    <location>
        <begin position="769"/>
        <end position="1363"/>
    </location>
</feature>
<feature type="chain" id="PRO_0000444077" description="Spike protein S2'" evidence="2">
    <location>
        <begin position="914"/>
        <end position="1363"/>
    </location>
</feature>
<feature type="topological domain" description="Extracellular" evidence="2">
    <location>
        <begin position="14"/>
        <end position="1307"/>
    </location>
</feature>
<feature type="transmembrane region" description="Helical" evidence="2">
    <location>
        <begin position="1308"/>
        <end position="1328"/>
    </location>
</feature>
<feature type="topological domain" description="Cytoplasmic" evidence="2">
    <location>
        <begin position="1329"/>
        <end position="1363"/>
    </location>
</feature>
<feature type="domain" description="BetaCoV S1-NTD" evidence="4">
    <location>
        <begin position="15"/>
        <end position="298"/>
    </location>
</feature>
<feature type="domain" description="BetaCoV S1-CTD" evidence="3">
    <location>
        <begin position="329"/>
        <end position="617"/>
    </location>
</feature>
<feature type="region of interest" description="Fusion peptide 1" evidence="2">
    <location>
        <begin position="914"/>
        <end position="935"/>
    </location>
</feature>
<feature type="region of interest" description="Fusion peptide 2" evidence="2">
    <location>
        <begin position="933"/>
        <end position="953"/>
    </location>
</feature>
<feature type="region of interest" description="Heptad repeat 1" evidence="2">
    <location>
        <begin position="1014"/>
        <end position="1064"/>
    </location>
</feature>
<feature type="region of interest" description="Heptad repeat 2" evidence="2">
    <location>
        <begin position="1258"/>
        <end position="1296"/>
    </location>
</feature>
<feature type="coiled-coil region" evidence="2">
    <location>
        <begin position="1043"/>
        <end position="1087"/>
    </location>
</feature>
<feature type="coiled-coil region" evidence="2">
    <location>
        <begin position="1269"/>
        <end position="1297"/>
    </location>
</feature>
<feature type="short sequence motif" description="KxHxx" evidence="2">
    <location>
        <begin position="1359"/>
        <end position="1363"/>
    </location>
</feature>
<feature type="site" description="Cleavage; by host" evidence="1">
    <location>
        <begin position="768"/>
        <end position="769"/>
    </location>
</feature>
<feature type="site" description="Cleavage" evidence="2">
    <location>
        <begin position="913"/>
        <end position="914"/>
    </location>
</feature>
<feature type="glycosylation site" description="N-linked (GlcNAc...) asparagine; by host" evidence="2">
    <location>
        <position position="59"/>
    </location>
</feature>
<feature type="glycosylation site" description="N-linked (GlcNAc...) asparagine; by host" evidence="2">
    <location>
        <position position="133"/>
    </location>
</feature>
<feature type="glycosylation site" description="N-linked (GlcNAc...) asparagine; by host" evidence="2">
    <location>
        <position position="198"/>
    </location>
</feature>
<feature type="glycosylation site" description="N-linked (GlcNAc...) asparagine; by host" evidence="2">
    <location>
        <position position="359"/>
    </location>
</feature>
<feature type="glycosylation site" description="N-linked (GlcNAc...) asparagine; by host" evidence="2">
    <location>
        <position position="437"/>
    </location>
</feature>
<feature type="glycosylation site" description="N-linked (GlcNAc...) asparagine; by host" evidence="2">
    <location>
        <position position="649"/>
    </location>
</feature>
<feature type="glycosylation site" description="N-linked (GlcNAc...) asparagine; by host" evidence="2">
    <location>
        <position position="676"/>
    </location>
</feature>
<feature type="glycosylation site" description="N-linked (GlcNAc...) asparagine; by host" evidence="2">
    <location>
        <position position="696"/>
    </location>
</feature>
<feature type="glycosylation site" description="N-linked (GlcNAc...) asparagine; by host" evidence="2">
    <location>
        <position position="714"/>
    </location>
</feature>
<feature type="glycosylation site" description="N-linked (GlcNAc...) asparagine; by host" evidence="2">
    <location>
        <position position="739"/>
    </location>
</feature>
<feature type="glycosylation site" description="N-linked (GlcNAc...) asparagine; by host" evidence="2">
    <location>
        <position position="788"/>
    </location>
</feature>
<feature type="glycosylation site" description="N-linked (GlcNAc...) asparagine; by host" evidence="2">
    <location>
        <position position="937"/>
    </location>
</feature>
<feature type="glycosylation site" description="N-linked (GlcNAc...) asparagine; by host" evidence="2">
    <location>
        <position position="1194"/>
    </location>
</feature>
<feature type="glycosylation site" description="N-linked (GlcNAc...) asparagine; by host" evidence="2">
    <location>
        <position position="1224"/>
    </location>
</feature>
<feature type="glycosylation site" description="N-linked (GlcNAc...) asparagine; by host" evidence="2">
    <location>
        <position position="1234"/>
    </location>
</feature>
<feature type="glycosylation site" description="N-linked (GlcNAc...) asparagine; by host" evidence="2">
    <location>
        <position position="1253"/>
    </location>
</feature>
<feature type="glycosylation site" description="N-linked (GlcNAc...) asparagine; by host" evidence="2">
    <location>
        <position position="1267"/>
    </location>
</feature>
<feature type="glycosylation site" description="N-linked (GlcNAc...) asparagine; by host" evidence="2">
    <location>
        <position position="1288"/>
    </location>
</feature>
<feature type="disulfide bond" evidence="4">
    <location>
        <begin position="21"/>
        <end position="165"/>
    </location>
</feature>
<feature type="disulfide bond" evidence="4">
    <location>
        <begin position="160"/>
        <end position="193"/>
    </location>
</feature>
<feature type="disulfide bond" evidence="4">
    <location>
        <begin position="172"/>
        <end position="252"/>
    </location>
</feature>
<feature type="disulfide bond" evidence="4">
    <location>
        <begin position="286"/>
        <end position="296"/>
    </location>
</feature>
<feature type="disulfide bond" evidence="3">
    <location>
        <begin position="331"/>
        <end position="356"/>
    </location>
</feature>
<feature type="disulfide bond" evidence="3">
    <location>
        <begin position="374"/>
        <end position="427"/>
    </location>
</feature>
<feature type="disulfide bond" evidence="3">
    <location>
        <begin position="386"/>
        <end position="615"/>
    </location>
</feature>
<feature type="disulfide bond" evidence="2">
    <location>
        <begin position="938"/>
        <end position="949"/>
    </location>
</feature>
<organismHost>
    <name type="scientific">Bos taurus</name>
    <name type="common">Bovine</name>
    <dbReference type="NCBI Taxonomy" id="9913"/>
</organismHost>
<comment type="function">
    <molecule>Spike protein S1</molecule>
    <text evidence="2">Attaches the virion to the cell membrane by interacting with host receptor, initiating the infection.</text>
</comment>
<comment type="function">
    <molecule>Spike protein S2</molecule>
    <text evidence="2">Mediates fusion of the virion and cellular membranes by acting as a class I viral fusion protein. Under the current model, the protein has at least three conformational states: pre-fusion native state, pre-hairpin intermediate state, and post-fusion hairpin state. During viral and target cell membrane fusion, the coiled coil regions (heptad repeats) assume a trimer-of-hairpins structure, positioning the fusion peptide in close proximity to the C-terminal region of the ectodomain. The formation of this structure appears to drive apposition and subsequent fusion of viral and target cell membranes.</text>
</comment>
<comment type="function">
    <molecule>Spike protein S2'</molecule>
    <text evidence="2">Acts as a viral fusion peptide which is unmasked following S2 cleavage occurring upon virus endocytosis.</text>
</comment>
<comment type="subunit">
    <text evidence="2">Homotrimer; each monomer consists of a S1 and a S2 subunit. The resulting peplomers protrude from the virus surface as spikes.</text>
</comment>
<comment type="subcellular location">
    <subcellularLocation>
        <location evidence="2">Virion membrane</location>
        <topology evidence="2">Single-pass type I membrane protein</topology>
    </subcellularLocation>
    <subcellularLocation>
        <location evidence="2">Host endoplasmic reticulum-Golgi intermediate compartment membrane</location>
        <topology evidence="2">Single-pass type I membrane protein</topology>
    </subcellularLocation>
    <subcellularLocation>
        <location evidence="2">Host cell membrane</location>
        <topology evidence="2">Single-pass type I membrane protein</topology>
    </subcellularLocation>
    <text evidence="2">Accumulates in the endoplasmic reticulum-Golgi intermediate compartment, where it participates in virus particle assembly. Some S oligomers are transported to the host plasma membrane, where they may mediate cell-cell fusion.</text>
</comment>
<comment type="domain">
    <text evidence="2">Fusion peptide 1 (FP1) and fusion peptide 2 (FP2) function cooperatively and have a membrane-ordering effect on lipid headgroups and shallow hydrophobic regions of target bilayers. They are considered as two domains of an extended, bipartite FP. The membrane-ordering activity is calcium-dependent and also dependent on correct folding, which is maintained by an internal disulfide bond in FP2.</text>
</comment>
<comment type="PTM">
    <text evidence="2">Specific enzymatic cleavages in vivo yield mature proteins. The precursor is processed into S1 and S2 by host cell furin or another cellular protease to yield the mature S1 and S2 proteins. Additionally, a second cleavage leads to the release of a fusion peptide after viral attachment to host cell receptor.</text>
</comment>
<comment type="PTM">
    <text evidence="2">The cytoplasmic Cys-rich domain is palmitoylated. Spike glycoprotein is digested within host endosomes.</text>
</comment>
<comment type="similarity">
    <text evidence="2">Belongs to the betacoronaviruses spike protein family.</text>
</comment>
<accession>P25194</accession>
<reference key="1">
    <citation type="journal article" date="1991" name="Virology">
        <title>Comparison of the nucleotide and deduced amino acid sequences of the S genes specified by virulent and avirulent strains of bovine coronaviruses.</title>
        <authorList>
            <person name="Zhang X."/>
            <person name="Kousoulas K.G."/>
            <person name="Storz J."/>
        </authorList>
    </citation>
    <scope>NUCLEOTIDE SEQUENCE [GENOMIC RNA]</scope>
</reference>
<keyword id="KW-0175">Coiled coil</keyword>
<keyword id="KW-1015">Disulfide bond</keyword>
<keyword id="KW-1170">Fusion of virus membrane with host endosomal membrane</keyword>
<keyword id="KW-1168">Fusion of virus membrane with host membrane</keyword>
<keyword id="KW-0325">Glycoprotein</keyword>
<keyword id="KW-1032">Host cell membrane</keyword>
<keyword id="KW-1043">Host membrane</keyword>
<keyword id="KW-0945">Host-virus interaction</keyword>
<keyword id="KW-0449">Lipoprotein</keyword>
<keyword id="KW-0472">Membrane</keyword>
<keyword id="KW-0564">Palmitate</keyword>
<keyword id="KW-0732">Signal</keyword>
<keyword id="KW-0812">Transmembrane</keyword>
<keyword id="KW-1133">Transmembrane helix</keyword>
<keyword id="KW-1161">Viral attachment to host cell</keyword>
<keyword id="KW-0261">Viral envelope protein</keyword>
<keyword id="KW-1162">Viral penetration into host cytoplasm</keyword>
<keyword id="KW-0946">Virion</keyword>
<keyword id="KW-0843">Virulence</keyword>
<keyword id="KW-1160">Virus entry into host cell</keyword>
<sequence>MFLILLISLPMAFAVIGDLKCTTVSINDVDTGAPSISTDTVDVTNGLGTYYVLDRVYLNTTLLLNGYYPTSGSTYRNMALKGTLLLSRLWFKPPFLSDFINGIFAKVKNTKVIKKGVMYSEFPAITIGSTFVNTSYSVVVQPHTTNLDNKLQGLLEISVCQYTMCEYPHTICHPNLGNQRVELWHWDTGVVSCLYKRNFTYDVNADYLYFHFYQEGGTFYAYFTDTGVVTKFLFNVYLGTVLSHYYVLPLTCYSAMTLEYWVTPLTSKQYLLAFNQDGVIFNAVDCKSDFMSEIKCKTLSIAPSTGVYELNGYTVQPIADVYRRIPNLPDCNIEAWLNDKSVPSPLNWERKTFSNCNFNMSSLMSFIQADSFTCNNIEAAKIYGMCFSSITIDKFAIPNGRKVDLQLGNLGYLQSFNYRIDTTAASCQLYYNLPAANVSVSRFNPSTWNRRFGFTEQSVFKPQPVGVFTHHDVVYAQHCFKAPTNFCPCKLDGSLCVGNGPGIDAGYKNSGIGTCPAGTNYLTCHNAAQCDCLCTPDPITSKSTGPYKCPQTKYLVGIGEHCSGLAIKSDYCGGNPCTCQPQAFLGWSVDSCLQGDRCNIFANFILHDVNSGTTCSTDLQKSNTDIILGVCVNYDLYGITGQGIFVEVNATYYNSWQNLLYDSNGNLYGFRDYLTNRTFMIRSCYSGRVSAAFHANSSEPALLFRNIKCNYVFNNTLSRQLQPINYFDSYLGCVVNADNSTSSVVQTCDLTVGSGYCVDYSTKRRSRRAITTGYRFTNFEPFTVNSVNDSLEPVGGLYEIQIPSEFTIGNMEEFIQTSSPKVTIDCSAFVCGDYAACKSQLVEYGSFCDNINAILTEVNELLDTTQLQVANSLMNGVTLSTKLKDGVNFNVDDINFSPVLGCLGSDCNKVSSRSAIEDLLFSKVKLSDVGFVEAYNNCTGGAEIRDLICVQSYNGIKVLPPLLSVNQISGYTLAATSASLFPPWSAAAGVPFYLNVQYRINGIGVTMDVLSQNQKLIANAFNNALDAIQEGFDATNSALVKIQAVVNANAEALNNLLQQLSNRFGAISSSLQEILSRLDALEAQAQIDRLINGRLTALNAYVSQQLSDSTLVKFSAAQAMEKVNECVKSQSSRINFCGNGNHIISLVQNAPYGLYFIHFSYVPTKYVTAKVSPGLCIAGDRGIAPKSGYFVNVNNTWMFTGSGYYYPEPITGNNVVVMSTCAVNYTKAPDVMLNISTPNLHDFKEELDQWFKNQTSVAPDLSLDYINVTFLDLQDEMNRLQEAIKVLNQSYINLKDIGTYEYYVKWPWYVWLLIGFAGVAMLVLLFFICCCTGCGTSCFKICGGCCDDYTGHQELVIKTSHDD</sequence>
<name>SPIKE_CVBV</name>
<proteinExistence type="inferred from homology"/>